<evidence type="ECO:0000255" key="1">
    <source>
        <dbReference type="HAMAP-Rule" id="MF_01236"/>
    </source>
</evidence>
<evidence type="ECO:0000256" key="2">
    <source>
        <dbReference type="SAM" id="MobiDB-lite"/>
    </source>
</evidence>
<keyword id="KW-0238">DNA-binding</keyword>
<keyword id="KW-0678">Repressor</keyword>
<keyword id="KW-0804">Transcription</keyword>
<keyword id="KW-0805">Transcription regulation</keyword>
<accession>C0PZN5</accession>
<dbReference type="EMBL" id="CP000857">
    <property type="protein sequence ID" value="ACN47495.1"/>
    <property type="molecule type" value="Genomic_DNA"/>
</dbReference>
<dbReference type="RefSeq" id="WP_000382926.1">
    <property type="nucleotide sequence ID" value="NC_012125.1"/>
</dbReference>
<dbReference type="SMR" id="C0PZN5"/>
<dbReference type="KEGG" id="sei:SPC_3410"/>
<dbReference type="HOGENOM" id="CLU_017584_9_1_6"/>
<dbReference type="Proteomes" id="UP000001599">
    <property type="component" value="Chromosome"/>
</dbReference>
<dbReference type="GO" id="GO:0003677">
    <property type="term" value="F:DNA binding"/>
    <property type="evidence" value="ECO:0007669"/>
    <property type="project" value="UniProtKB-KW"/>
</dbReference>
<dbReference type="GO" id="GO:0003700">
    <property type="term" value="F:DNA-binding transcription factor activity"/>
    <property type="evidence" value="ECO:0007669"/>
    <property type="project" value="UniProtKB-UniRule"/>
</dbReference>
<dbReference type="GO" id="GO:0045892">
    <property type="term" value="P:negative regulation of DNA-templated transcription"/>
    <property type="evidence" value="ECO:0007669"/>
    <property type="project" value="UniProtKB-UniRule"/>
</dbReference>
<dbReference type="CDD" id="cd07377">
    <property type="entry name" value="WHTH_GntR"/>
    <property type="match status" value="1"/>
</dbReference>
<dbReference type="FunFam" id="1.10.10.10:FF:000150">
    <property type="entry name" value="HTH-type transcriptional repressor NanR"/>
    <property type="match status" value="1"/>
</dbReference>
<dbReference type="Gene3D" id="1.20.120.530">
    <property type="entry name" value="GntR ligand-binding domain-like"/>
    <property type="match status" value="1"/>
</dbReference>
<dbReference type="Gene3D" id="1.10.10.10">
    <property type="entry name" value="Winged helix-like DNA-binding domain superfamily/Winged helix DNA-binding domain"/>
    <property type="match status" value="1"/>
</dbReference>
<dbReference type="HAMAP" id="MF_01236">
    <property type="entry name" value="HTH_NanR"/>
    <property type="match status" value="1"/>
</dbReference>
<dbReference type="InterPro" id="IPR011711">
    <property type="entry name" value="GntR_C"/>
</dbReference>
<dbReference type="InterPro" id="IPR008920">
    <property type="entry name" value="TF_FadR/GntR_C"/>
</dbReference>
<dbReference type="InterPro" id="IPR000524">
    <property type="entry name" value="Tscrpt_reg_HTH_GntR"/>
</dbReference>
<dbReference type="InterPro" id="IPR023730">
    <property type="entry name" value="Tscrpt_reg_NanR"/>
</dbReference>
<dbReference type="InterPro" id="IPR036388">
    <property type="entry name" value="WH-like_DNA-bd_sf"/>
</dbReference>
<dbReference type="InterPro" id="IPR036390">
    <property type="entry name" value="WH_DNA-bd_sf"/>
</dbReference>
<dbReference type="NCBIfam" id="NF003011">
    <property type="entry name" value="PRK03837.1"/>
    <property type="match status" value="1"/>
</dbReference>
<dbReference type="PANTHER" id="PTHR43537:SF53">
    <property type="entry name" value="HTH-TYPE TRANSCRIPTIONAL REPRESSOR NANR"/>
    <property type="match status" value="1"/>
</dbReference>
<dbReference type="PANTHER" id="PTHR43537">
    <property type="entry name" value="TRANSCRIPTIONAL REGULATOR, GNTR FAMILY"/>
    <property type="match status" value="1"/>
</dbReference>
<dbReference type="Pfam" id="PF07729">
    <property type="entry name" value="FCD"/>
    <property type="match status" value="1"/>
</dbReference>
<dbReference type="Pfam" id="PF00392">
    <property type="entry name" value="GntR"/>
    <property type="match status" value="1"/>
</dbReference>
<dbReference type="PRINTS" id="PR00035">
    <property type="entry name" value="HTHGNTR"/>
</dbReference>
<dbReference type="SMART" id="SM00895">
    <property type="entry name" value="FCD"/>
    <property type="match status" value="1"/>
</dbReference>
<dbReference type="SMART" id="SM00345">
    <property type="entry name" value="HTH_GNTR"/>
    <property type="match status" value="1"/>
</dbReference>
<dbReference type="SUPFAM" id="SSF48008">
    <property type="entry name" value="GntR ligand-binding domain-like"/>
    <property type="match status" value="1"/>
</dbReference>
<dbReference type="SUPFAM" id="SSF46785">
    <property type="entry name" value="Winged helix' DNA-binding domain"/>
    <property type="match status" value="1"/>
</dbReference>
<dbReference type="PROSITE" id="PS50949">
    <property type="entry name" value="HTH_GNTR"/>
    <property type="match status" value="1"/>
</dbReference>
<name>NANR_SALPC</name>
<comment type="function">
    <text evidence="1">Transcriptional repressor that controls expression of the genes required for the catabolism of sialic acids.</text>
</comment>
<comment type="similarity">
    <text evidence="1">Belongs to the NanR family.</text>
</comment>
<proteinExistence type="inferred from homology"/>
<protein>
    <recommendedName>
        <fullName evidence="1">HTH-type transcriptional repressor NanR</fullName>
    </recommendedName>
</protein>
<feature type="chain" id="PRO_1000165002" description="HTH-type transcriptional repressor NanR">
    <location>
        <begin position="1"/>
        <end position="263"/>
    </location>
</feature>
<feature type="domain" description="HTH gntR-type" evidence="1">
    <location>
        <begin position="30"/>
        <end position="98"/>
    </location>
</feature>
<feature type="DNA-binding region" description="H-T-H motif" evidence="1">
    <location>
        <begin position="58"/>
        <end position="77"/>
    </location>
</feature>
<feature type="region of interest" description="Disordered" evidence="2">
    <location>
        <begin position="1"/>
        <end position="25"/>
    </location>
</feature>
<organism>
    <name type="scientific">Salmonella paratyphi C (strain RKS4594)</name>
    <dbReference type="NCBI Taxonomy" id="476213"/>
    <lineage>
        <taxon>Bacteria</taxon>
        <taxon>Pseudomonadati</taxon>
        <taxon>Pseudomonadota</taxon>
        <taxon>Gammaproteobacteria</taxon>
        <taxon>Enterobacterales</taxon>
        <taxon>Enterobacteriaceae</taxon>
        <taxon>Salmonella</taxon>
    </lineage>
</organism>
<gene>
    <name evidence="1" type="primary">nanR</name>
    <name type="ordered locus">SPC_3410</name>
</gene>
<sequence length="263" mass="29803">MDVMNAFDSQAEDSPTSLGRSLRRRPLARKKLSEMVEEELEQMIRRHEFGEGEQLPSERELMAFFNVGRPSVREALAALKRKGLVQINNGERARVSRPSADTIISELSGMAKDFLTHPGGIAHFEQLRLFFESSLVRYAAEHATDEQIALLTKALEINSQSLDDNALFIRSDVEFHRVLAEIPGNPIFMAIHVALLDWLIAARPSVPDRELHEHNNVSYQQHIVIVDAIRQRDPDKADRALQTHLNSVSATWHALGKKSQKMR</sequence>
<reference key="1">
    <citation type="journal article" date="2009" name="PLoS ONE">
        <title>Salmonella paratyphi C: genetic divergence from Salmonella choleraesuis and pathogenic convergence with Salmonella typhi.</title>
        <authorList>
            <person name="Liu W.-Q."/>
            <person name="Feng Y."/>
            <person name="Wang Y."/>
            <person name="Zou Q.-H."/>
            <person name="Chen F."/>
            <person name="Guo J.-T."/>
            <person name="Peng Y.-H."/>
            <person name="Jin Y."/>
            <person name="Li Y.-G."/>
            <person name="Hu S.-N."/>
            <person name="Johnston R.N."/>
            <person name="Liu G.-R."/>
            <person name="Liu S.-L."/>
        </authorList>
    </citation>
    <scope>NUCLEOTIDE SEQUENCE [LARGE SCALE GENOMIC DNA]</scope>
    <source>
        <strain>RKS4594</strain>
    </source>
</reference>